<reference key="1">
    <citation type="submission" date="2006-08" db="EMBL/GenBank/DDBJ databases">
        <title>Complete sequence of Shewanella sp. MR-4.</title>
        <authorList>
            <consortium name="US DOE Joint Genome Institute"/>
            <person name="Copeland A."/>
            <person name="Lucas S."/>
            <person name="Lapidus A."/>
            <person name="Barry K."/>
            <person name="Detter J.C."/>
            <person name="Glavina del Rio T."/>
            <person name="Hammon N."/>
            <person name="Israni S."/>
            <person name="Dalin E."/>
            <person name="Tice H."/>
            <person name="Pitluck S."/>
            <person name="Kiss H."/>
            <person name="Brettin T."/>
            <person name="Bruce D."/>
            <person name="Han C."/>
            <person name="Tapia R."/>
            <person name="Gilna P."/>
            <person name="Schmutz J."/>
            <person name="Larimer F."/>
            <person name="Land M."/>
            <person name="Hauser L."/>
            <person name="Kyrpides N."/>
            <person name="Mikhailova N."/>
            <person name="Nealson K."/>
            <person name="Konstantinidis K."/>
            <person name="Klappenbach J."/>
            <person name="Tiedje J."/>
            <person name="Richardson P."/>
        </authorList>
    </citation>
    <scope>NUCLEOTIDE SEQUENCE [LARGE SCALE GENOMIC DNA]</scope>
    <source>
        <strain>MR-4</strain>
    </source>
</reference>
<comment type="function">
    <text evidence="1">Functions in the N-end rule pathway of protein degradation where it conjugates Leu from its aminoacyl-tRNA to the N-termini of proteins containing an N-terminal aspartate or glutamate.</text>
</comment>
<comment type="catalytic activity">
    <reaction evidence="1">
        <text>N-terminal L-glutamyl-[protein] + L-leucyl-tRNA(Leu) = N-terminal L-leucyl-L-glutamyl-[protein] + tRNA(Leu) + H(+)</text>
        <dbReference type="Rhea" id="RHEA:50412"/>
        <dbReference type="Rhea" id="RHEA-COMP:9613"/>
        <dbReference type="Rhea" id="RHEA-COMP:9622"/>
        <dbReference type="Rhea" id="RHEA-COMP:12664"/>
        <dbReference type="Rhea" id="RHEA-COMP:12668"/>
        <dbReference type="ChEBI" id="CHEBI:15378"/>
        <dbReference type="ChEBI" id="CHEBI:64721"/>
        <dbReference type="ChEBI" id="CHEBI:78442"/>
        <dbReference type="ChEBI" id="CHEBI:78494"/>
        <dbReference type="ChEBI" id="CHEBI:133041"/>
        <dbReference type="EC" id="2.3.2.29"/>
    </reaction>
</comment>
<comment type="catalytic activity">
    <reaction evidence="1">
        <text>N-terminal L-aspartyl-[protein] + L-leucyl-tRNA(Leu) = N-terminal L-leucyl-L-aspartyl-[protein] + tRNA(Leu) + H(+)</text>
        <dbReference type="Rhea" id="RHEA:50420"/>
        <dbReference type="Rhea" id="RHEA-COMP:9613"/>
        <dbReference type="Rhea" id="RHEA-COMP:9622"/>
        <dbReference type="Rhea" id="RHEA-COMP:12669"/>
        <dbReference type="Rhea" id="RHEA-COMP:12674"/>
        <dbReference type="ChEBI" id="CHEBI:15378"/>
        <dbReference type="ChEBI" id="CHEBI:64720"/>
        <dbReference type="ChEBI" id="CHEBI:78442"/>
        <dbReference type="ChEBI" id="CHEBI:78494"/>
        <dbReference type="ChEBI" id="CHEBI:133042"/>
        <dbReference type="EC" id="2.3.2.29"/>
    </reaction>
</comment>
<comment type="subcellular location">
    <subcellularLocation>
        <location evidence="1">Cytoplasm</location>
    </subcellularLocation>
</comment>
<comment type="similarity">
    <text evidence="1">Belongs to the R-transferase family. Bpt subfamily.</text>
</comment>
<accession>Q0HJP1</accession>
<evidence type="ECO:0000255" key="1">
    <source>
        <dbReference type="HAMAP-Rule" id="MF_00689"/>
    </source>
</evidence>
<proteinExistence type="inferred from homology"/>
<protein>
    <recommendedName>
        <fullName evidence="1">Aspartate/glutamate leucyltransferase</fullName>
        <ecNumber evidence="1">2.3.2.29</ecNumber>
    </recommendedName>
</protein>
<name>BPT_SHESM</name>
<dbReference type="EC" id="2.3.2.29" evidence="1"/>
<dbReference type="EMBL" id="CP000446">
    <property type="protein sequence ID" value="ABI38726.1"/>
    <property type="molecule type" value="Genomic_DNA"/>
</dbReference>
<dbReference type="RefSeq" id="WP_011622427.1">
    <property type="nucleotide sequence ID" value="NC_008321.1"/>
</dbReference>
<dbReference type="SMR" id="Q0HJP1"/>
<dbReference type="KEGG" id="she:Shewmr4_1650"/>
<dbReference type="HOGENOM" id="CLU_077607_0_0_6"/>
<dbReference type="GO" id="GO:0005737">
    <property type="term" value="C:cytoplasm"/>
    <property type="evidence" value="ECO:0007669"/>
    <property type="project" value="UniProtKB-SubCell"/>
</dbReference>
<dbReference type="GO" id="GO:0004057">
    <property type="term" value="F:arginyl-tRNA--protein transferase activity"/>
    <property type="evidence" value="ECO:0007669"/>
    <property type="project" value="InterPro"/>
</dbReference>
<dbReference type="GO" id="GO:0008914">
    <property type="term" value="F:leucyl-tRNA--protein transferase activity"/>
    <property type="evidence" value="ECO:0007669"/>
    <property type="project" value="UniProtKB-UniRule"/>
</dbReference>
<dbReference type="GO" id="GO:0071596">
    <property type="term" value="P:ubiquitin-dependent protein catabolic process via the N-end rule pathway"/>
    <property type="evidence" value="ECO:0007669"/>
    <property type="project" value="InterPro"/>
</dbReference>
<dbReference type="HAMAP" id="MF_00689">
    <property type="entry name" value="Bpt"/>
    <property type="match status" value="1"/>
</dbReference>
<dbReference type="InterPro" id="IPR016181">
    <property type="entry name" value="Acyl_CoA_acyltransferase"/>
</dbReference>
<dbReference type="InterPro" id="IPR017138">
    <property type="entry name" value="Asp_Glu_LeuTrfase"/>
</dbReference>
<dbReference type="InterPro" id="IPR030700">
    <property type="entry name" value="N-end_Aminoacyl_Trfase"/>
</dbReference>
<dbReference type="InterPro" id="IPR007472">
    <property type="entry name" value="N-end_Aminoacyl_Trfase_C"/>
</dbReference>
<dbReference type="InterPro" id="IPR007471">
    <property type="entry name" value="N-end_Aminoacyl_Trfase_N"/>
</dbReference>
<dbReference type="NCBIfam" id="NF002342">
    <property type="entry name" value="PRK01305.1-3"/>
    <property type="match status" value="1"/>
</dbReference>
<dbReference type="NCBIfam" id="NF002345">
    <property type="entry name" value="PRK01305.2-2"/>
    <property type="match status" value="1"/>
</dbReference>
<dbReference type="NCBIfam" id="NF002346">
    <property type="entry name" value="PRK01305.2-3"/>
    <property type="match status" value="1"/>
</dbReference>
<dbReference type="NCBIfam" id="NF002347">
    <property type="entry name" value="PRK01305.2-4"/>
    <property type="match status" value="1"/>
</dbReference>
<dbReference type="PANTHER" id="PTHR21367">
    <property type="entry name" value="ARGININE-TRNA-PROTEIN TRANSFERASE 1"/>
    <property type="match status" value="1"/>
</dbReference>
<dbReference type="PANTHER" id="PTHR21367:SF1">
    <property type="entry name" value="ARGINYL-TRNA--PROTEIN TRANSFERASE 1"/>
    <property type="match status" value="1"/>
</dbReference>
<dbReference type="Pfam" id="PF04377">
    <property type="entry name" value="ATE_C"/>
    <property type="match status" value="1"/>
</dbReference>
<dbReference type="Pfam" id="PF04376">
    <property type="entry name" value="ATE_N"/>
    <property type="match status" value="1"/>
</dbReference>
<dbReference type="PIRSF" id="PIRSF037208">
    <property type="entry name" value="ATE_pro_prd"/>
    <property type="match status" value="1"/>
</dbReference>
<dbReference type="SUPFAM" id="SSF55729">
    <property type="entry name" value="Acyl-CoA N-acyltransferases (Nat)"/>
    <property type="match status" value="1"/>
</dbReference>
<keyword id="KW-0012">Acyltransferase</keyword>
<keyword id="KW-0963">Cytoplasm</keyword>
<keyword id="KW-0808">Transferase</keyword>
<sequence length="238" mass="27809">MNSNASNTPIAIGISQIFPCSYLDGQQEQLLVIQEETLDPILFDRLLAIGFRRSGSAIYKPRCPRCSACQPIRLPIKEFTPSKRQKRTLAHNRDLTWRITSEHTEAQYALYEKYIRERHFDGPMFPPSKSQYEQFLFCHWLPATFIEVYDGNRLLAVAVTDTLPNSLSAIYSYFDPDEERRSLGSLLILLQCRLAKLQDKEFLYLGYQIDANRKMSYKRLYRPYQILTPQGWEYSQVC</sequence>
<gene>
    <name evidence="1" type="primary">bpt</name>
    <name type="ordered locus">Shewmr4_1650</name>
</gene>
<feature type="chain" id="PRO_0000263216" description="Aspartate/glutamate leucyltransferase">
    <location>
        <begin position="1"/>
        <end position="238"/>
    </location>
</feature>
<organism>
    <name type="scientific">Shewanella sp. (strain MR-4)</name>
    <dbReference type="NCBI Taxonomy" id="60480"/>
    <lineage>
        <taxon>Bacteria</taxon>
        <taxon>Pseudomonadati</taxon>
        <taxon>Pseudomonadota</taxon>
        <taxon>Gammaproteobacteria</taxon>
        <taxon>Alteromonadales</taxon>
        <taxon>Shewanellaceae</taxon>
        <taxon>Shewanella</taxon>
    </lineage>
</organism>